<name>AMYA_DROME</name>
<keyword id="KW-0002">3D-structure</keyword>
<keyword id="KW-0106">Calcium</keyword>
<keyword id="KW-0119">Carbohydrate metabolism</keyword>
<keyword id="KW-0868">Chloride</keyword>
<keyword id="KW-1015">Disulfide bond</keyword>
<keyword id="KW-0326">Glycosidase</keyword>
<keyword id="KW-0378">Hydrolase</keyword>
<keyword id="KW-0479">Metal-binding</keyword>
<keyword id="KW-0873">Pyrrolidone carboxylic acid</keyword>
<keyword id="KW-1185">Reference proteome</keyword>
<keyword id="KW-0732">Signal</keyword>
<comment type="catalytic activity">
    <reaction evidence="2">
        <text>Endohydrolysis of (1-&gt;4)-alpha-D-glucosidic linkages in polysaccharides containing three or more (1-&gt;4)-alpha-linked D-glucose units.</text>
        <dbReference type="EC" id="3.2.1.1"/>
    </reaction>
</comment>
<comment type="cofactor">
    <cofactor evidence="2">
        <name>Ca(2+)</name>
        <dbReference type="ChEBI" id="CHEBI:29108"/>
    </cofactor>
    <text evidence="2">Binds 1 Ca(2+) ion per subunit.</text>
</comment>
<comment type="cofactor">
    <cofactor evidence="2">
        <name>chloride</name>
        <dbReference type="ChEBI" id="CHEBI:17996"/>
    </cofactor>
    <text evidence="2">Binds 1 Cl(-) ion per subunit.</text>
</comment>
<comment type="subunit">
    <text evidence="1">Monomer.</text>
</comment>
<comment type="polymorphism">
    <text evidence="3">At least 6 electrophoretic isozymes are known: Amy1, Amy2, Amy3, Amy4, Amy5 and Amy6. Strains J87 and KO123 express Amy2; KO140 and 1420#1 express Amy4; L16 expresses Amy5.</text>
</comment>
<comment type="similarity">
    <text evidence="4">Belongs to the glycosyl hydrolase 13 family.</text>
</comment>
<evidence type="ECO:0000250" key="1"/>
<evidence type="ECO:0000250" key="2">
    <source>
        <dbReference type="UniProtKB" id="P04746"/>
    </source>
</evidence>
<evidence type="ECO:0000269" key="3">
    <source>
    </source>
</evidence>
<evidence type="ECO:0000305" key="4"/>
<evidence type="ECO:0007829" key="5">
    <source>
        <dbReference type="PDB" id="8OR6"/>
    </source>
</evidence>
<reference key="1">
    <citation type="journal article" date="1986" name="Nucleic Acids Res.">
        <title>The alpha-amylase gene in Drosophila melanogaster: nucleotide sequence, gene structure and expression motifs.</title>
        <authorList>
            <person name="Boer P.H."/>
            <person name="Hickey D.A."/>
        </authorList>
    </citation>
    <scope>NUCLEOTIDE SEQUENCE [GENOMIC DNA]</scope>
    <source>
        <strain>Canton-S</strain>
        <strain>Oregon-R</strain>
    </source>
</reference>
<reference key="2">
    <citation type="journal article" date="1995" name="Genetics">
        <title>Evolutionary relationships and sequence variation of alpha-amylase variants encoded by duplicated genes in the Amy locus of Drosophila melanogaster.</title>
        <authorList>
            <person name="Inomata N."/>
            <person name="Shibata H."/>
            <person name="Okuyama E."/>
            <person name="Yamazaki T."/>
        </authorList>
    </citation>
    <scope>NUCLEOTIDE SEQUENCE [GENOMIC DNA]</scope>
    <scope>POLYMORPHISM</scope>
    <source>
        <strain>1420#1</strain>
        <strain>AO168</strain>
        <strain>J87</strain>
        <strain>KO123</strain>
        <strain>KO140</strain>
        <strain>L16</strain>
        <strain>TN22</strain>
        <strain>TN256</strain>
        <strain>TN329</strain>
    </source>
</reference>
<reference key="3">
    <citation type="journal article" date="2001" name="Genetics">
        <title>Molecular evolution of duplicated amylase gene regions in Drosophila melanogaster: evidence of positive selection in the coding regions and selective constraints in the cis-regulatory regions.</title>
        <authorList>
            <person name="Araki H."/>
            <person name="Inomata N."/>
            <person name="Yamazaki T."/>
        </authorList>
    </citation>
    <scope>NUCLEOTIDE SEQUENCE [GENOMIC DNA]</scope>
    <scope>VARIANTS</scope>
    <source>
        <strain>JP-1</strain>
        <strain>JP-15</strain>
        <strain>JP-169</strain>
        <strain>JP-186</strain>
        <strain>JP-190</strain>
        <strain>JP-35</strain>
        <strain>JP-5</strain>
        <strain>JP-55</strain>
        <strain>JP-60</strain>
        <strain>JP-65</strain>
        <strain>JP-70</strain>
        <strain>JP-75</strain>
        <strain>JP-84</strain>
        <strain>KN-10</strain>
        <strain>KN-12</strain>
        <strain>KN-15</strain>
        <strain>KN-17</strain>
        <strain>KN-21</strain>
        <strain>KN-22</strain>
        <strain>KN-23</strain>
        <strain>KN-27</strain>
        <strain>KN-28</strain>
        <strain>KN-3</strain>
        <strain>KN-7</strain>
        <strain>KN-9</strain>
    </source>
</reference>
<reference key="4">
    <citation type="journal article" date="2000" name="Science">
        <title>The genome sequence of Drosophila melanogaster.</title>
        <authorList>
            <person name="Adams M.D."/>
            <person name="Celniker S.E."/>
            <person name="Holt R.A."/>
            <person name="Evans C.A."/>
            <person name="Gocayne J.D."/>
            <person name="Amanatides P.G."/>
            <person name="Scherer S.E."/>
            <person name="Li P.W."/>
            <person name="Hoskins R.A."/>
            <person name="Galle R.F."/>
            <person name="George R.A."/>
            <person name="Lewis S.E."/>
            <person name="Richards S."/>
            <person name="Ashburner M."/>
            <person name="Henderson S.N."/>
            <person name="Sutton G.G."/>
            <person name="Wortman J.R."/>
            <person name="Yandell M.D."/>
            <person name="Zhang Q."/>
            <person name="Chen L.X."/>
            <person name="Brandon R.C."/>
            <person name="Rogers Y.-H.C."/>
            <person name="Blazej R.G."/>
            <person name="Champe M."/>
            <person name="Pfeiffer B.D."/>
            <person name="Wan K.H."/>
            <person name="Doyle C."/>
            <person name="Baxter E.G."/>
            <person name="Helt G."/>
            <person name="Nelson C.R."/>
            <person name="Miklos G.L.G."/>
            <person name="Abril J.F."/>
            <person name="Agbayani A."/>
            <person name="An H.-J."/>
            <person name="Andrews-Pfannkoch C."/>
            <person name="Baldwin D."/>
            <person name="Ballew R.M."/>
            <person name="Basu A."/>
            <person name="Baxendale J."/>
            <person name="Bayraktaroglu L."/>
            <person name="Beasley E.M."/>
            <person name="Beeson K.Y."/>
            <person name="Benos P.V."/>
            <person name="Berman B.P."/>
            <person name="Bhandari D."/>
            <person name="Bolshakov S."/>
            <person name="Borkova D."/>
            <person name="Botchan M.R."/>
            <person name="Bouck J."/>
            <person name="Brokstein P."/>
            <person name="Brottier P."/>
            <person name="Burtis K.C."/>
            <person name="Busam D.A."/>
            <person name="Butler H."/>
            <person name="Cadieu E."/>
            <person name="Center A."/>
            <person name="Chandra I."/>
            <person name="Cherry J.M."/>
            <person name="Cawley S."/>
            <person name="Dahlke C."/>
            <person name="Davenport L.B."/>
            <person name="Davies P."/>
            <person name="de Pablos B."/>
            <person name="Delcher A."/>
            <person name="Deng Z."/>
            <person name="Mays A.D."/>
            <person name="Dew I."/>
            <person name="Dietz S.M."/>
            <person name="Dodson K."/>
            <person name="Doup L.E."/>
            <person name="Downes M."/>
            <person name="Dugan-Rocha S."/>
            <person name="Dunkov B.C."/>
            <person name="Dunn P."/>
            <person name="Durbin K.J."/>
            <person name="Evangelista C.C."/>
            <person name="Ferraz C."/>
            <person name="Ferriera S."/>
            <person name="Fleischmann W."/>
            <person name="Fosler C."/>
            <person name="Gabrielian A.E."/>
            <person name="Garg N.S."/>
            <person name="Gelbart W.M."/>
            <person name="Glasser K."/>
            <person name="Glodek A."/>
            <person name="Gong F."/>
            <person name="Gorrell J.H."/>
            <person name="Gu Z."/>
            <person name="Guan P."/>
            <person name="Harris M."/>
            <person name="Harris N.L."/>
            <person name="Harvey D.A."/>
            <person name="Heiman T.J."/>
            <person name="Hernandez J.R."/>
            <person name="Houck J."/>
            <person name="Hostin D."/>
            <person name="Houston K.A."/>
            <person name="Howland T.J."/>
            <person name="Wei M.-H."/>
            <person name="Ibegwam C."/>
            <person name="Jalali M."/>
            <person name="Kalush F."/>
            <person name="Karpen G.H."/>
            <person name="Ke Z."/>
            <person name="Kennison J.A."/>
            <person name="Ketchum K.A."/>
            <person name="Kimmel B.E."/>
            <person name="Kodira C.D."/>
            <person name="Kraft C.L."/>
            <person name="Kravitz S."/>
            <person name="Kulp D."/>
            <person name="Lai Z."/>
            <person name="Lasko P."/>
            <person name="Lei Y."/>
            <person name="Levitsky A.A."/>
            <person name="Li J.H."/>
            <person name="Li Z."/>
            <person name="Liang Y."/>
            <person name="Lin X."/>
            <person name="Liu X."/>
            <person name="Mattei B."/>
            <person name="McIntosh T.C."/>
            <person name="McLeod M.P."/>
            <person name="McPherson D."/>
            <person name="Merkulov G."/>
            <person name="Milshina N.V."/>
            <person name="Mobarry C."/>
            <person name="Morris J."/>
            <person name="Moshrefi A."/>
            <person name="Mount S.M."/>
            <person name="Moy M."/>
            <person name="Murphy B."/>
            <person name="Murphy L."/>
            <person name="Muzny D.M."/>
            <person name="Nelson D.L."/>
            <person name="Nelson D.R."/>
            <person name="Nelson K.A."/>
            <person name="Nixon K."/>
            <person name="Nusskern D.R."/>
            <person name="Pacleb J.M."/>
            <person name="Palazzolo M."/>
            <person name="Pittman G.S."/>
            <person name="Pan S."/>
            <person name="Pollard J."/>
            <person name="Puri V."/>
            <person name="Reese M.G."/>
            <person name="Reinert K."/>
            <person name="Remington K."/>
            <person name="Saunders R.D.C."/>
            <person name="Scheeler F."/>
            <person name="Shen H."/>
            <person name="Shue B.C."/>
            <person name="Siden-Kiamos I."/>
            <person name="Simpson M."/>
            <person name="Skupski M.P."/>
            <person name="Smith T.J."/>
            <person name="Spier E."/>
            <person name="Spradling A.C."/>
            <person name="Stapleton M."/>
            <person name="Strong R."/>
            <person name="Sun E."/>
            <person name="Svirskas R."/>
            <person name="Tector C."/>
            <person name="Turner R."/>
            <person name="Venter E."/>
            <person name="Wang A.H."/>
            <person name="Wang X."/>
            <person name="Wang Z.-Y."/>
            <person name="Wassarman D.A."/>
            <person name="Weinstock G.M."/>
            <person name="Weissenbach J."/>
            <person name="Williams S.M."/>
            <person name="Woodage T."/>
            <person name="Worley K.C."/>
            <person name="Wu D."/>
            <person name="Yang S."/>
            <person name="Yao Q.A."/>
            <person name="Ye J."/>
            <person name="Yeh R.-F."/>
            <person name="Zaveri J.S."/>
            <person name="Zhan M."/>
            <person name="Zhang G."/>
            <person name="Zhao Q."/>
            <person name="Zheng L."/>
            <person name="Zheng X.H."/>
            <person name="Zhong F.N."/>
            <person name="Zhong W."/>
            <person name="Zhou X."/>
            <person name="Zhu S.C."/>
            <person name="Zhu X."/>
            <person name="Smith H.O."/>
            <person name="Gibbs R.A."/>
            <person name="Myers E.W."/>
            <person name="Rubin G.M."/>
            <person name="Venter J.C."/>
        </authorList>
    </citation>
    <scope>NUCLEOTIDE SEQUENCE [LARGE SCALE GENOMIC DNA]</scope>
    <source>
        <strain>Berkeley</strain>
    </source>
</reference>
<reference key="5">
    <citation type="journal article" date="2002" name="Genome Biol.">
        <title>Annotation of the Drosophila melanogaster euchromatic genome: a systematic review.</title>
        <authorList>
            <person name="Misra S."/>
            <person name="Crosby M.A."/>
            <person name="Mungall C.J."/>
            <person name="Matthews B.B."/>
            <person name="Campbell K.S."/>
            <person name="Hradecky P."/>
            <person name="Huang Y."/>
            <person name="Kaminker J.S."/>
            <person name="Millburn G.H."/>
            <person name="Prochnik S.E."/>
            <person name="Smith C.D."/>
            <person name="Tupy J.L."/>
            <person name="Whitfield E.J."/>
            <person name="Bayraktaroglu L."/>
            <person name="Berman B.P."/>
            <person name="Bettencourt B.R."/>
            <person name="Celniker S.E."/>
            <person name="de Grey A.D.N.J."/>
            <person name="Drysdale R.A."/>
            <person name="Harris N.L."/>
            <person name="Richter J."/>
            <person name="Russo S."/>
            <person name="Schroeder A.J."/>
            <person name="Shu S.Q."/>
            <person name="Stapleton M."/>
            <person name="Yamada C."/>
            <person name="Ashburner M."/>
            <person name="Gelbart W.M."/>
            <person name="Rubin G.M."/>
            <person name="Lewis S.E."/>
        </authorList>
    </citation>
    <scope>GENOME REANNOTATION</scope>
    <source>
        <strain>Berkeley</strain>
    </source>
</reference>
<reference key="6">
    <citation type="journal article" date="2002" name="Genome Biol.">
        <title>A Drosophila full-length cDNA resource.</title>
        <authorList>
            <person name="Stapleton M."/>
            <person name="Carlson J.W."/>
            <person name="Brokstein P."/>
            <person name="Yu C."/>
            <person name="Champe M."/>
            <person name="George R.A."/>
            <person name="Guarin H."/>
            <person name="Kronmiller B."/>
            <person name="Pacleb J.M."/>
            <person name="Park S."/>
            <person name="Wan K.H."/>
            <person name="Rubin G.M."/>
            <person name="Celniker S.E."/>
        </authorList>
    </citation>
    <scope>NUCLEOTIDE SEQUENCE [LARGE SCALE MRNA]</scope>
    <source>
        <strain>Berkeley</strain>
        <tissue>Head</tissue>
    </source>
</reference>
<protein>
    <recommendedName>
        <fullName>Alpha-amylase A</fullName>
        <ecNumber evidence="2">3.2.1.1</ecNumber>
    </recommendedName>
    <alternativeName>
        <fullName>1,4-alpha-D-glucan glucanohydrolase</fullName>
    </alternativeName>
</protein>
<sequence length="494" mass="53746">MFLAKSIVCLALLAVANAQFDTNYASGRSGMVHLFEWKWDDIAAECENFLGPNGYAGVQVSPVNENAVKDSRPWWERYQPISYKLETRSGNEEQFASMVKRCNAVGVRTYVDVVFNHMAADGGTYGTGGSTASPSSKSYPGVPYSSLDFNPTCAISNYNDANEVRNCELVGLRDLNQGNSYVQDKVVEFLDHLIDLGVAGFRVDAAKHMWPADLAVIYGRLKNLNTDHGFASGSKAYIVQEVIDMGGEAISKSEYTGLGAITEFRHSDSIGKVFRGKDQLQYLTNWGTAWGFAASDRSLVFVDNHDNQRGHGAGGADVLTYKVPKQYKMASAFMLAHPFGTPRVMSSFSFTDTDQGPPTTDGHNIASPIFNSDNSCSGGWVCEHRWRQIYNMVAFRNTVGSDEIQNWWDNGSNQISFSRGSRGFVAFNNDNYDLNSSLQTGLPAGTYCDVISGSKSGSSCTGKTVTVGSDGRASINIGSSEDDGVLAIHVNAKL</sequence>
<dbReference type="EC" id="3.2.1.1" evidence="2"/>
<dbReference type="EMBL" id="X04569">
    <property type="protein sequence ID" value="CAA28238.1"/>
    <property type="molecule type" value="Genomic_DNA"/>
</dbReference>
<dbReference type="EMBL" id="L22716">
    <property type="protein sequence ID" value="AAA92226.1"/>
    <property type="molecule type" value="Genomic_DNA"/>
</dbReference>
<dbReference type="EMBL" id="L22719">
    <property type="protein sequence ID" value="AAA92229.1"/>
    <property type="molecule type" value="Genomic_DNA"/>
</dbReference>
<dbReference type="EMBL" id="L22721">
    <property type="protein sequence ID" value="AAA92231.1"/>
    <property type="molecule type" value="Genomic_DNA"/>
</dbReference>
<dbReference type="EMBL" id="L22725">
    <property type="protein sequence ID" value="AAA92235.1"/>
    <property type="molecule type" value="Genomic_DNA"/>
</dbReference>
<dbReference type="EMBL" id="L22726">
    <property type="protein sequence ID" value="AAA92239.1"/>
    <property type="molecule type" value="Genomic_DNA"/>
</dbReference>
<dbReference type="EMBL" id="L22729">
    <property type="protein sequence ID" value="AAA92240.1"/>
    <property type="molecule type" value="Genomic_DNA"/>
</dbReference>
<dbReference type="EMBL" id="L22731">
    <property type="protein sequence ID" value="AAA92234.1"/>
    <property type="molecule type" value="Genomic_DNA"/>
</dbReference>
<dbReference type="EMBL" id="L22733">
    <property type="protein sequence ID" value="AAA92241.1"/>
    <property type="molecule type" value="Genomic_DNA"/>
</dbReference>
<dbReference type="EMBL" id="L22735">
    <property type="protein sequence ID" value="AAA92236.1"/>
    <property type="molecule type" value="Genomic_DNA"/>
</dbReference>
<dbReference type="EMBL" id="AB042862">
    <property type="protein sequence ID" value="BAB32503.1"/>
    <property type="molecule type" value="Genomic_DNA"/>
</dbReference>
<dbReference type="EMBL" id="AB042863">
    <property type="protein sequence ID" value="BAB32504.1"/>
    <property type="molecule type" value="Genomic_DNA"/>
</dbReference>
<dbReference type="EMBL" id="AB042864">
    <property type="protein sequence ID" value="BAB32505.1"/>
    <property type="molecule type" value="Genomic_DNA"/>
</dbReference>
<dbReference type="EMBL" id="AB042865">
    <property type="protein sequence ID" value="BAB32506.1"/>
    <property type="molecule type" value="Genomic_DNA"/>
</dbReference>
<dbReference type="EMBL" id="AB042866">
    <property type="protein sequence ID" value="BAB32507.1"/>
    <property type="molecule type" value="Genomic_DNA"/>
</dbReference>
<dbReference type="EMBL" id="AB042867">
    <property type="protein sequence ID" value="BAB32508.1"/>
    <property type="molecule type" value="Genomic_DNA"/>
</dbReference>
<dbReference type="EMBL" id="AB042868">
    <property type="protein sequence ID" value="BAB32509.1"/>
    <property type="molecule type" value="Genomic_DNA"/>
</dbReference>
<dbReference type="EMBL" id="AB042869">
    <property type="protein sequence ID" value="BAB32510.1"/>
    <property type="molecule type" value="Genomic_DNA"/>
</dbReference>
<dbReference type="EMBL" id="AB042870">
    <property type="protein sequence ID" value="BAB32511.1"/>
    <property type="molecule type" value="Genomic_DNA"/>
</dbReference>
<dbReference type="EMBL" id="AB042871">
    <property type="protein sequence ID" value="BAB32512.1"/>
    <property type="molecule type" value="Genomic_DNA"/>
</dbReference>
<dbReference type="EMBL" id="AB042872">
    <property type="protein sequence ID" value="BAB32513.1"/>
    <property type="molecule type" value="Genomic_DNA"/>
</dbReference>
<dbReference type="EMBL" id="AB042873">
    <property type="protein sequence ID" value="BAB32514.1"/>
    <property type="molecule type" value="Genomic_DNA"/>
</dbReference>
<dbReference type="EMBL" id="AB042874">
    <property type="protein sequence ID" value="BAB32515.1"/>
    <property type="molecule type" value="Genomic_DNA"/>
</dbReference>
<dbReference type="EMBL" id="AB042875">
    <property type="protein sequence ID" value="BAB32516.1"/>
    <property type="molecule type" value="Genomic_DNA"/>
</dbReference>
<dbReference type="EMBL" id="AB042876">
    <property type="protein sequence ID" value="BAB32517.1"/>
    <property type="molecule type" value="Genomic_DNA"/>
</dbReference>
<dbReference type="EMBL" id="AB042877">
    <property type="protein sequence ID" value="BAB32518.1"/>
    <property type="molecule type" value="Genomic_DNA"/>
</dbReference>
<dbReference type="EMBL" id="AB042878">
    <property type="protein sequence ID" value="BAB32519.1"/>
    <property type="molecule type" value="Genomic_DNA"/>
</dbReference>
<dbReference type="EMBL" id="AB042879">
    <property type="protein sequence ID" value="BAB32520.1"/>
    <property type="molecule type" value="Genomic_DNA"/>
</dbReference>
<dbReference type="EMBL" id="AB042880">
    <property type="protein sequence ID" value="BAB32521.1"/>
    <property type="molecule type" value="Genomic_DNA"/>
</dbReference>
<dbReference type="EMBL" id="AB042881">
    <property type="protein sequence ID" value="BAB32522.1"/>
    <property type="molecule type" value="Genomic_DNA"/>
</dbReference>
<dbReference type="EMBL" id="AB042882">
    <property type="protein sequence ID" value="BAB32523.1"/>
    <property type="molecule type" value="Genomic_DNA"/>
</dbReference>
<dbReference type="EMBL" id="AB042883">
    <property type="protein sequence ID" value="BAB32524.1"/>
    <property type="molecule type" value="Genomic_DNA"/>
</dbReference>
<dbReference type="EMBL" id="AB042884">
    <property type="protein sequence ID" value="BAB72090.1"/>
    <property type="molecule type" value="Genomic_DNA"/>
</dbReference>
<dbReference type="EMBL" id="AB042885">
    <property type="protein sequence ID" value="BAB72091.1"/>
    <property type="molecule type" value="Genomic_DNA"/>
</dbReference>
<dbReference type="EMBL" id="AB042886">
    <property type="protein sequence ID" value="BAB72092.1"/>
    <property type="molecule type" value="Genomic_DNA"/>
</dbReference>
<dbReference type="EMBL" id="AE013599">
    <property type="protein sequence ID" value="AAF57896.1"/>
    <property type="molecule type" value="Genomic_DNA"/>
</dbReference>
<dbReference type="EMBL" id="AY051425">
    <property type="protein sequence ID" value="AAK92849.1"/>
    <property type="molecule type" value="mRNA"/>
</dbReference>
<dbReference type="PIR" id="A25529">
    <property type="entry name" value="A25529"/>
</dbReference>
<dbReference type="PIR" id="S58953">
    <property type="entry name" value="S58953"/>
</dbReference>
<dbReference type="PIR" id="S58956">
    <property type="entry name" value="S58956"/>
</dbReference>
<dbReference type="PIR" id="S58957">
    <property type="entry name" value="S58957"/>
</dbReference>
<dbReference type="PIR" id="S58958">
    <property type="entry name" value="S58958"/>
</dbReference>
<dbReference type="PIR" id="S58961">
    <property type="entry name" value="S58961"/>
</dbReference>
<dbReference type="PIR" id="S58965">
    <property type="entry name" value="S58965"/>
</dbReference>
<dbReference type="RefSeq" id="NP_001286518.1">
    <property type="nucleotide sequence ID" value="NM_001299589.1"/>
</dbReference>
<dbReference type="RefSeq" id="NP_536346.1">
    <property type="nucleotide sequence ID" value="NM_080421.4"/>
</dbReference>
<dbReference type="PDB" id="8OR6">
    <property type="method" value="X-ray"/>
    <property type="resolution" value="2.50 A"/>
    <property type="chains" value="A/B=1-494"/>
</dbReference>
<dbReference type="PDB" id="8ORP">
    <property type="method" value="X-ray"/>
    <property type="resolution" value="2.00 A"/>
    <property type="chains" value="A/B=1-494"/>
</dbReference>
<dbReference type="PDBsum" id="8OR6"/>
<dbReference type="PDBsum" id="8ORP"/>
<dbReference type="SMR" id="P08144"/>
<dbReference type="BioGRID" id="70922">
    <property type="interactions" value="2"/>
</dbReference>
<dbReference type="FunCoup" id="P08144">
    <property type="interactions" value="31"/>
</dbReference>
<dbReference type="IntAct" id="P08144">
    <property type="interactions" value="1"/>
</dbReference>
<dbReference type="CAZy" id="GH13">
    <property type="family name" value="Glycoside Hydrolase Family 13"/>
</dbReference>
<dbReference type="PeptideAtlas" id="P08144"/>
<dbReference type="GeneID" id="47764"/>
<dbReference type="KEGG" id="dme:Dmel_CG18730"/>
<dbReference type="AGR" id="FB:FBgn0000079"/>
<dbReference type="CTD" id="47764"/>
<dbReference type="FlyBase" id="FBgn0000079">
    <property type="gene designation" value="Amy-p"/>
</dbReference>
<dbReference type="VEuPathDB" id="VectorBase:FBgn0000079"/>
<dbReference type="HOGENOM" id="CLU_013336_2_1_1"/>
<dbReference type="InParanoid" id="P08144"/>
<dbReference type="OrthoDB" id="550577at2759"/>
<dbReference type="PhylomeDB" id="P08144"/>
<dbReference type="BRENDA" id="3.2.1.1">
    <property type="organism ID" value="1994"/>
</dbReference>
<dbReference type="Reactome" id="R-DME-189085">
    <property type="pathway name" value="Digestion of dietary carbohydrate"/>
</dbReference>
<dbReference type="BioGRID-ORCS" id="47764">
    <property type="hits" value="0 hits in 3 CRISPR screens"/>
</dbReference>
<dbReference type="GenomeRNAi" id="47764"/>
<dbReference type="PRO" id="PR:P08144"/>
<dbReference type="Proteomes" id="UP000000803">
    <property type="component" value="Chromosome 2R"/>
</dbReference>
<dbReference type="ExpressionAtlas" id="P08144">
    <property type="expression patterns" value="baseline and differential"/>
</dbReference>
<dbReference type="GO" id="GO:0005576">
    <property type="term" value="C:extracellular region"/>
    <property type="evidence" value="ECO:0007005"/>
    <property type="project" value="FlyBase"/>
</dbReference>
<dbReference type="GO" id="GO:0005615">
    <property type="term" value="C:extracellular space"/>
    <property type="evidence" value="ECO:0000318"/>
    <property type="project" value="GO_Central"/>
</dbReference>
<dbReference type="GO" id="GO:0004556">
    <property type="term" value="F:alpha-amylase activity"/>
    <property type="evidence" value="ECO:0000314"/>
    <property type="project" value="FlyBase"/>
</dbReference>
<dbReference type="GO" id="GO:0005509">
    <property type="term" value="F:calcium ion binding"/>
    <property type="evidence" value="ECO:0000314"/>
    <property type="project" value="FlyBase"/>
</dbReference>
<dbReference type="GO" id="GO:0016052">
    <property type="term" value="P:carbohydrate catabolic process"/>
    <property type="evidence" value="ECO:0000314"/>
    <property type="project" value="FlyBase"/>
</dbReference>
<dbReference type="GO" id="GO:0005975">
    <property type="term" value="P:carbohydrate metabolic process"/>
    <property type="evidence" value="ECO:0000318"/>
    <property type="project" value="GO_Central"/>
</dbReference>
<dbReference type="CDD" id="cd11317">
    <property type="entry name" value="AmyAc_bac_euk_AmyA"/>
    <property type="match status" value="1"/>
</dbReference>
<dbReference type="FunFam" id="2.60.40.1180:FF:000020">
    <property type="entry name" value="Pancreatic alpha-amylase"/>
    <property type="match status" value="1"/>
</dbReference>
<dbReference type="FunFam" id="3.20.20.80:FF:000056">
    <property type="entry name" value="Pancreatic alpha-amylase"/>
    <property type="match status" value="1"/>
</dbReference>
<dbReference type="Gene3D" id="3.20.20.80">
    <property type="entry name" value="Glycosidases"/>
    <property type="match status" value="1"/>
</dbReference>
<dbReference type="Gene3D" id="2.60.40.1180">
    <property type="entry name" value="Golgi alpha-mannosidase II"/>
    <property type="match status" value="1"/>
</dbReference>
<dbReference type="InterPro" id="IPR006048">
    <property type="entry name" value="A-amylase/branching_C"/>
</dbReference>
<dbReference type="InterPro" id="IPR031319">
    <property type="entry name" value="A-amylase_C"/>
</dbReference>
<dbReference type="InterPro" id="IPR006046">
    <property type="entry name" value="Alpha_amylase"/>
</dbReference>
<dbReference type="InterPro" id="IPR006047">
    <property type="entry name" value="Glyco_hydro_13_cat_dom"/>
</dbReference>
<dbReference type="InterPro" id="IPR013780">
    <property type="entry name" value="Glyco_hydro_b"/>
</dbReference>
<dbReference type="InterPro" id="IPR017853">
    <property type="entry name" value="Glycoside_hydrolase_SF"/>
</dbReference>
<dbReference type="PANTHER" id="PTHR43447">
    <property type="entry name" value="ALPHA-AMYLASE"/>
    <property type="match status" value="1"/>
</dbReference>
<dbReference type="Pfam" id="PF00128">
    <property type="entry name" value="Alpha-amylase"/>
    <property type="match status" value="1"/>
</dbReference>
<dbReference type="Pfam" id="PF02806">
    <property type="entry name" value="Alpha-amylase_C"/>
    <property type="match status" value="1"/>
</dbReference>
<dbReference type="PRINTS" id="PR00110">
    <property type="entry name" value="ALPHAAMYLASE"/>
</dbReference>
<dbReference type="SMART" id="SM00642">
    <property type="entry name" value="Aamy"/>
    <property type="match status" value="1"/>
</dbReference>
<dbReference type="SMART" id="SM00632">
    <property type="entry name" value="Aamy_C"/>
    <property type="match status" value="1"/>
</dbReference>
<dbReference type="SUPFAM" id="SSF51445">
    <property type="entry name" value="(Trans)glycosidases"/>
    <property type="match status" value="1"/>
</dbReference>
<dbReference type="SUPFAM" id="SSF51011">
    <property type="entry name" value="Glycosyl hydrolase domain"/>
    <property type="match status" value="1"/>
</dbReference>
<proteinExistence type="evidence at protein level"/>
<gene>
    <name type="primary">Amy-p</name>
    <name type="synonym">AmyA</name>
    <name type="ORF">CG18730</name>
</gene>
<feature type="signal peptide">
    <location>
        <begin position="1"/>
        <end position="18"/>
    </location>
</feature>
<feature type="chain" id="PRO_0000001364" description="Alpha-amylase A">
    <location>
        <begin position="19"/>
        <end position="494"/>
    </location>
</feature>
<feature type="active site" description="Nucleophile" evidence="2">
    <location>
        <position position="204"/>
    </location>
</feature>
<feature type="active site" description="Proton donor" evidence="2">
    <location>
        <position position="241"/>
    </location>
</feature>
<feature type="binding site" evidence="2">
    <location>
        <position position="116"/>
    </location>
    <ligand>
        <name>Ca(2+)</name>
        <dbReference type="ChEBI" id="CHEBI:29108"/>
    </ligand>
</feature>
<feature type="binding site" evidence="2">
    <location>
        <position position="165"/>
    </location>
    <ligand>
        <name>Ca(2+)</name>
        <dbReference type="ChEBI" id="CHEBI:29108"/>
    </ligand>
</feature>
<feature type="binding site" evidence="2">
    <location>
        <position position="174"/>
    </location>
    <ligand>
        <name>Ca(2+)</name>
        <dbReference type="ChEBI" id="CHEBI:29108"/>
    </ligand>
</feature>
<feature type="binding site" evidence="2">
    <location>
        <position position="202"/>
    </location>
    <ligand>
        <name>chloride</name>
        <dbReference type="ChEBI" id="CHEBI:17996"/>
    </ligand>
</feature>
<feature type="binding site" evidence="2">
    <location>
        <position position="208"/>
    </location>
    <ligand>
        <name>Ca(2+)</name>
        <dbReference type="ChEBI" id="CHEBI:29108"/>
    </ligand>
</feature>
<feature type="binding site" evidence="2">
    <location>
        <position position="304"/>
    </location>
    <ligand>
        <name>chloride</name>
        <dbReference type="ChEBI" id="CHEBI:17996"/>
    </ligand>
</feature>
<feature type="binding site" evidence="2">
    <location>
        <position position="343"/>
    </location>
    <ligand>
        <name>chloride</name>
        <dbReference type="ChEBI" id="CHEBI:17996"/>
    </ligand>
</feature>
<feature type="site" description="Transition state stabilizer" evidence="2">
    <location>
        <position position="306"/>
    </location>
</feature>
<feature type="modified residue" description="Pyrrolidone carboxylic acid" evidence="1">
    <location>
        <position position="19"/>
    </location>
</feature>
<feature type="disulfide bond" evidence="2">
    <location>
        <begin position="46"/>
        <end position="102"/>
    </location>
</feature>
<feature type="disulfide bond" evidence="2">
    <location>
        <begin position="153"/>
        <end position="167"/>
    </location>
</feature>
<feature type="disulfide bond" evidence="2">
    <location>
        <begin position="376"/>
        <end position="382"/>
    </location>
</feature>
<feature type="disulfide bond" evidence="2">
    <location>
        <begin position="448"/>
        <end position="460"/>
    </location>
</feature>
<feature type="sequence variant" description="In strain: KN-28.">
    <original>A</original>
    <variation>S</variation>
    <location>
        <position position="11"/>
    </location>
</feature>
<feature type="sequence variant" description="In strain: KN-22 and KN-23.">
    <original>A</original>
    <variation>V</variation>
    <location>
        <position position="16"/>
    </location>
</feature>
<feature type="sequence variant" description="In strain: KN-3, KN-9, KN-10 and L16.">
    <original>S</original>
    <variation>R</variation>
    <location>
        <position position="71"/>
    </location>
</feature>
<feature type="sequence variant" description="In strain: TN256, 1420#1 and KO140.">
    <original>D</original>
    <variation>G</variation>
    <location>
        <position position="121"/>
    </location>
</feature>
<feature type="sequence variant" description="In strain: KN-3, KN-9, KN-10 and L16.">
    <original>D</original>
    <variation>N</variation>
    <location>
        <position position="121"/>
    </location>
</feature>
<feature type="sequence variant" description="In strain: JP-75, KN-7, KN-15, KN-17, KN-21 and KN-23.">
    <original>S</original>
    <variation>T</variation>
    <location>
        <position position="138"/>
    </location>
</feature>
<feature type="sequence variant" description="In strain: Canton-S.">
    <original>Y</original>
    <variation>H</variation>
    <location>
        <position position="144"/>
    </location>
</feature>
<feature type="sequence variant" description="In strain: 1420#1, KN-3, KN-9, KN-10, KO140, L16 and TN256.">
    <original>S</original>
    <variation>R</variation>
    <location>
        <position position="156"/>
    </location>
</feature>
<feature type="sequence variant" description="In strain: Canton-S.">
    <original>Y</original>
    <variation>N</variation>
    <location>
        <position position="181"/>
    </location>
</feature>
<feature type="sequence variant" description="In strain: JP-70, KN-17 and KN-21.">
    <original>A</original>
    <variation>S</variation>
    <location>
        <position position="231"/>
    </location>
</feature>
<feature type="sequence variant" description="In strain: 1420#1, KO140, KN-3, KN-9, KN-10 and L16.">
    <original>D</original>
    <variation>N</variation>
    <location>
        <position position="278"/>
    </location>
</feature>
<feature type="sequence variant" description="In strain: KN-21.">
    <original>T</original>
    <variation>I</variation>
    <location>
        <position position="284"/>
    </location>
</feature>
<feature type="sequence variant" description="In strain: 1420#1, J87, JP-60, JP-70, JP-75, KO123, KO140, KN-9, KN-15, KN-21, L16 and TN256.">
    <original>T</original>
    <variation>A</variation>
    <location>
        <position position="398"/>
    </location>
</feature>
<feature type="sequence variant" description="In strain: Berkeley.">
    <original>S</original>
    <variation>L</variation>
    <location>
        <position position="401"/>
    </location>
</feature>
<feature type="sequence variant" description="In strain: J87, JP-60 and KO123.">
    <original>E</original>
    <variation>A</variation>
    <location>
        <position position="403"/>
    </location>
</feature>
<feature type="sequence variant" description="In strain: 1420#1.">
    <original>V</original>
    <variation>I</variation>
    <location>
        <position position="465"/>
    </location>
</feature>
<feature type="sequence variant" description="In strain: KN-23.">
    <original>S</original>
    <variation>Y</variation>
    <location>
        <position position="474"/>
    </location>
</feature>
<feature type="sequence variant" description="In strain: Berkeley, JP-1, JP-5, JP-15, JP-35, JP-55, JP-65, JP-84, KN-12, KN-22 and KN-27.">
    <original>N</original>
    <variation>Y</variation>
    <location>
        <position position="476"/>
    </location>
</feature>
<feature type="strand" evidence="5">
    <location>
        <begin position="31"/>
        <end position="34"/>
    </location>
</feature>
<feature type="helix" evidence="5">
    <location>
        <begin position="39"/>
        <end position="48"/>
    </location>
</feature>
<feature type="helix" evidence="5">
    <location>
        <begin position="51"/>
        <end position="53"/>
    </location>
</feature>
<feature type="strand" evidence="5">
    <location>
        <begin position="57"/>
        <end position="60"/>
    </location>
</feature>
<feature type="helix" evidence="5">
    <location>
        <begin position="74"/>
        <end position="78"/>
    </location>
</feature>
<feature type="strand" evidence="5">
    <location>
        <begin position="79"/>
        <end position="81"/>
    </location>
</feature>
<feature type="strand" evidence="5">
    <location>
        <begin position="83"/>
        <end position="87"/>
    </location>
</feature>
<feature type="helix" evidence="5">
    <location>
        <begin position="92"/>
        <end position="104"/>
    </location>
</feature>
<feature type="strand" evidence="5">
    <location>
        <begin position="108"/>
        <end position="113"/>
    </location>
</feature>
<feature type="strand" evidence="5">
    <location>
        <begin position="116"/>
        <end position="118"/>
    </location>
</feature>
<feature type="turn" evidence="5">
    <location>
        <begin position="134"/>
        <end position="137"/>
    </location>
</feature>
<feature type="turn" evidence="5">
    <location>
        <begin position="140"/>
        <end position="143"/>
    </location>
</feature>
<feature type="helix" evidence="5">
    <location>
        <begin position="146"/>
        <end position="148"/>
    </location>
</feature>
<feature type="helix" evidence="5">
    <location>
        <begin position="161"/>
        <end position="166"/>
    </location>
</feature>
<feature type="strand" evidence="5">
    <location>
        <begin position="167"/>
        <end position="169"/>
    </location>
</feature>
<feature type="strand" evidence="5">
    <location>
        <begin position="172"/>
        <end position="175"/>
    </location>
</feature>
<feature type="helix" evidence="5">
    <location>
        <begin position="180"/>
        <end position="195"/>
    </location>
</feature>
<feature type="strand" evidence="5">
    <location>
        <begin position="200"/>
        <end position="203"/>
    </location>
</feature>
<feature type="helix" evidence="5">
    <location>
        <begin position="206"/>
        <end position="208"/>
    </location>
</feature>
<feature type="helix" evidence="5">
    <location>
        <begin position="211"/>
        <end position="219"/>
    </location>
</feature>
<feature type="helix" evidence="5">
    <location>
        <begin position="226"/>
        <end position="228"/>
    </location>
</feature>
<feature type="strand" evidence="5">
    <location>
        <begin position="237"/>
        <end position="240"/>
    </location>
</feature>
<feature type="helix" evidence="5">
    <location>
        <begin position="252"/>
        <end position="254"/>
    </location>
</feature>
<feature type="turn" evidence="5">
    <location>
        <begin position="255"/>
        <end position="258"/>
    </location>
</feature>
<feature type="strand" evidence="5">
    <location>
        <begin position="259"/>
        <end position="262"/>
    </location>
</feature>
<feature type="helix" evidence="5">
    <location>
        <begin position="264"/>
        <end position="274"/>
    </location>
</feature>
<feature type="turn" evidence="5">
    <location>
        <begin position="275"/>
        <end position="277"/>
    </location>
</feature>
<feature type="helix" evidence="5">
    <location>
        <begin position="280"/>
        <end position="285"/>
    </location>
</feature>
<feature type="helix" evidence="5">
    <location>
        <begin position="288"/>
        <end position="290"/>
    </location>
</feature>
<feature type="helix" evidence="5">
    <location>
        <begin position="295"/>
        <end position="297"/>
    </location>
</feature>
<feature type="strand" evidence="5">
    <location>
        <begin position="298"/>
        <end position="302"/>
    </location>
</feature>
<feature type="helix" evidence="5">
    <location>
        <begin position="307"/>
        <end position="309"/>
    </location>
</feature>
<feature type="strand" evidence="5">
    <location>
        <begin position="310"/>
        <end position="314"/>
    </location>
</feature>
<feature type="helix" evidence="5">
    <location>
        <begin position="315"/>
        <end position="317"/>
    </location>
</feature>
<feature type="helix" evidence="5">
    <location>
        <begin position="324"/>
        <end position="336"/>
    </location>
</feature>
<feature type="strand" evidence="5">
    <location>
        <begin position="339"/>
        <end position="346"/>
    </location>
</feature>
<feature type="strand" evidence="5">
    <location>
        <begin position="359"/>
        <end position="365"/>
    </location>
</feature>
<feature type="strand" evidence="5">
    <location>
        <begin position="376"/>
        <end position="380"/>
    </location>
</feature>
<feature type="helix" evidence="5">
    <location>
        <begin position="383"/>
        <end position="385"/>
    </location>
</feature>
<feature type="helix" evidence="5">
    <location>
        <begin position="387"/>
        <end position="399"/>
    </location>
</feature>
<feature type="strand" evidence="5">
    <location>
        <begin position="404"/>
        <end position="409"/>
    </location>
</feature>
<feature type="strand" evidence="5">
    <location>
        <begin position="411"/>
        <end position="419"/>
    </location>
</feature>
<feature type="turn" evidence="5">
    <location>
        <begin position="420"/>
        <end position="422"/>
    </location>
</feature>
<feature type="strand" evidence="5">
    <location>
        <begin position="423"/>
        <end position="428"/>
    </location>
</feature>
<feature type="strand" evidence="5">
    <location>
        <begin position="430"/>
        <end position="432"/>
    </location>
</feature>
<feature type="strand" evidence="5">
    <location>
        <begin position="434"/>
        <end position="439"/>
    </location>
</feature>
<feature type="strand" evidence="5">
    <location>
        <begin position="444"/>
        <end position="448"/>
    </location>
</feature>
<feature type="turn" evidence="5">
    <location>
        <begin position="450"/>
        <end position="452"/>
    </location>
</feature>
<feature type="strand" evidence="5">
    <location>
        <begin position="459"/>
        <end position="462"/>
    </location>
</feature>
<feature type="strand" evidence="5">
    <location>
        <begin position="464"/>
        <end position="467"/>
    </location>
</feature>
<feature type="strand" evidence="5">
    <location>
        <begin position="471"/>
        <end position="477"/>
    </location>
</feature>
<feature type="strand" evidence="5">
    <location>
        <begin position="485"/>
        <end position="489"/>
    </location>
</feature>
<feature type="helix" evidence="5">
    <location>
        <begin position="490"/>
        <end position="492"/>
    </location>
</feature>
<accession>P08144</accession>
<accession>Q27582</accession>
<accession>Q27583</accession>
<accession>Q27584</accession>
<accession>Q27887</accession>
<accession>Q961R0</accession>
<accession>Q969D2</accession>
<accession>Q9BH42</accession>
<accession>Q9BH55</accession>
<accession>Q9BPT4</accession>
<accession>Q9BPT5</accession>
<accession>Q9BPT6</accession>
<accession>Q9BPT7</accession>
<accession>Q9BPT8</accession>
<accession>Q9BPT9</accession>
<accession>Q9BPU0</accession>
<accession>Q9BPU1</accession>
<accession>Q9V7Y8</accession>
<organism>
    <name type="scientific">Drosophila melanogaster</name>
    <name type="common">Fruit fly</name>
    <dbReference type="NCBI Taxonomy" id="7227"/>
    <lineage>
        <taxon>Eukaryota</taxon>
        <taxon>Metazoa</taxon>
        <taxon>Ecdysozoa</taxon>
        <taxon>Arthropoda</taxon>
        <taxon>Hexapoda</taxon>
        <taxon>Insecta</taxon>
        <taxon>Pterygota</taxon>
        <taxon>Neoptera</taxon>
        <taxon>Endopterygota</taxon>
        <taxon>Diptera</taxon>
        <taxon>Brachycera</taxon>
        <taxon>Muscomorpha</taxon>
        <taxon>Ephydroidea</taxon>
        <taxon>Drosophilidae</taxon>
        <taxon>Drosophila</taxon>
        <taxon>Sophophora</taxon>
    </lineage>
</organism>